<organism>
    <name type="scientific">Kogia sima</name>
    <name type="common">Dwarf sperm whale</name>
    <name type="synonym">Physeter simus</name>
    <dbReference type="NCBI Taxonomy" id="9752"/>
    <lineage>
        <taxon>Eukaryota</taxon>
        <taxon>Metazoa</taxon>
        <taxon>Chordata</taxon>
        <taxon>Craniata</taxon>
        <taxon>Vertebrata</taxon>
        <taxon>Euteleostomi</taxon>
        <taxon>Mammalia</taxon>
        <taxon>Eutheria</taxon>
        <taxon>Laurasiatheria</taxon>
        <taxon>Artiodactyla</taxon>
        <taxon>Whippomorpha</taxon>
        <taxon>Cetacea</taxon>
        <taxon>Odontoceti</taxon>
        <taxon>Physeteridae</taxon>
        <taxon>Kogia</taxon>
    </lineage>
</organism>
<accession>Q864Q5</accession>
<sequence>MFRIVNGEDYSPAVQQRNILDFGKAPSLLWTDNGSSNDRCDTGGNGRESGQDRVKRPMNAFIVWSRDQRRKVALENPQMQNSEISKRLGYDWKMLTEAEKQPFFEEAQRLRAMHRDKYPGYKYRPRRKPKRPQKLLPADSSVLCSRMHIEETLYPFTYKDGCAKATRSRMESQLSNSQPTNISSSLLPQEHPSSWTILRHNRVTQATQTCGRPLLL</sequence>
<gene>
    <name type="primary">SRY</name>
    <name type="synonym">TDF</name>
</gene>
<protein>
    <recommendedName>
        <fullName>Sex-determining region Y protein</fullName>
    </recommendedName>
    <alternativeName>
        <fullName>Testis-determining factor</fullName>
    </alternativeName>
</protein>
<comment type="function">
    <text evidence="1 2">Transcriptional regulator that controls a genetic switch in male development. It is necessary and sufficient for initiating male sex determination by directing the development of supporting cell precursors (pre-Sertoli cells) as Sertoli rather than granulosa cells. Involved in different aspects of gene regulation including promoter activation or repression. Binds to the DNA consensus sequence 5'-[AT]AACAA[AT]-3'. SRY HMG box recognizes DNA by partial intercalation in the minor groove and promotes DNA bending. Also involved in pre-mRNA splicing (By similarity). In male adult brain involved in the maintenance of motor functions of dopaminergic neurons (By similarity).</text>
</comment>
<comment type="subunit">
    <text evidence="2">Interacts with CALM, EP300, HDAC3, KPNB1, ZNF208 isoform KRAB-O, PARP1, SLC9A3R2 and WT1. The interaction with EP300 modulates its DNA-binding activity. The interaction with KPNB1 is sensitive to dissociation by Ran in the GTP-bound form. Interaction with PARP1 impaired its DNA-binding activity.</text>
</comment>
<comment type="subcellular location">
    <subcellularLocation>
        <location evidence="2">Nucleus speckle</location>
    </subcellularLocation>
    <subcellularLocation>
        <location evidence="2">Cytoplasm</location>
    </subcellularLocation>
    <subcellularLocation>
        <location evidence="2">Nucleus</location>
    </subcellularLocation>
</comment>
<comment type="similarity">
    <text evidence="5">Belongs to the SRY family.</text>
</comment>
<comment type="online information" name="Protein Spotlight">
    <link uri="https://www.proteinspotlight.org/back_issues/080"/>
    <text>The tenuous nature of sex - Issue 80 of March 2007</text>
</comment>
<proteinExistence type="inferred from homology"/>
<reference key="1">
    <citation type="journal article" date="2003" name="Mammal Study">
        <title>SRY gene structure and phylogeny in the cetacean species.</title>
        <authorList>
            <person name="Nishida S."/>
            <person name="Pastene L.A."/>
            <person name="Goto M."/>
            <person name="Koike H."/>
        </authorList>
    </citation>
    <scope>NUCLEOTIDE SEQUENCE [GENOMIC DNA]</scope>
</reference>
<dbReference type="EMBL" id="AB108516">
    <property type="protein sequence ID" value="BAC75648.1"/>
    <property type="molecule type" value="Genomic_DNA"/>
</dbReference>
<dbReference type="SMR" id="Q864Q5"/>
<dbReference type="GO" id="GO:0005737">
    <property type="term" value="C:cytoplasm"/>
    <property type="evidence" value="ECO:0007669"/>
    <property type="project" value="UniProtKB-SubCell"/>
</dbReference>
<dbReference type="GO" id="GO:0016607">
    <property type="term" value="C:nuclear speck"/>
    <property type="evidence" value="ECO:0007669"/>
    <property type="project" value="UniProtKB-SubCell"/>
</dbReference>
<dbReference type="GO" id="GO:0005634">
    <property type="term" value="C:nucleus"/>
    <property type="evidence" value="ECO:0000250"/>
    <property type="project" value="UniProtKB"/>
</dbReference>
<dbReference type="GO" id="GO:0005516">
    <property type="term" value="F:calmodulin binding"/>
    <property type="evidence" value="ECO:0007669"/>
    <property type="project" value="UniProtKB-KW"/>
</dbReference>
<dbReference type="GO" id="GO:0001228">
    <property type="term" value="F:DNA-binding transcription activator activity, RNA polymerase II-specific"/>
    <property type="evidence" value="ECO:0007669"/>
    <property type="project" value="TreeGrafter"/>
</dbReference>
<dbReference type="GO" id="GO:0000978">
    <property type="term" value="F:RNA polymerase II cis-regulatory region sequence-specific DNA binding"/>
    <property type="evidence" value="ECO:0007669"/>
    <property type="project" value="TreeGrafter"/>
</dbReference>
<dbReference type="GO" id="GO:0030154">
    <property type="term" value="P:cell differentiation"/>
    <property type="evidence" value="ECO:0007669"/>
    <property type="project" value="UniProtKB-KW"/>
</dbReference>
<dbReference type="GO" id="GO:0030238">
    <property type="term" value="P:male sex determination"/>
    <property type="evidence" value="ECO:0007669"/>
    <property type="project" value="InterPro"/>
</dbReference>
<dbReference type="GO" id="GO:0007548">
    <property type="term" value="P:sex differentiation"/>
    <property type="evidence" value="ECO:0007669"/>
    <property type="project" value="UniProtKB-KW"/>
</dbReference>
<dbReference type="CDD" id="cd22034">
    <property type="entry name" value="HMG-box_SoxA_SRY"/>
    <property type="match status" value="1"/>
</dbReference>
<dbReference type="FunFam" id="1.10.30.10:FF:000002">
    <property type="entry name" value="transcription factor Sox-2"/>
    <property type="match status" value="1"/>
</dbReference>
<dbReference type="Gene3D" id="1.10.30.10">
    <property type="entry name" value="High mobility group box domain"/>
    <property type="match status" value="1"/>
</dbReference>
<dbReference type="InterPro" id="IPR009071">
    <property type="entry name" value="HMG_box_dom"/>
</dbReference>
<dbReference type="InterPro" id="IPR036910">
    <property type="entry name" value="HMG_box_dom_sf"/>
</dbReference>
<dbReference type="InterPro" id="IPR017253">
    <property type="entry name" value="SRY"/>
</dbReference>
<dbReference type="InterPro" id="IPR050140">
    <property type="entry name" value="SRY-related_HMG-box_TF-like"/>
</dbReference>
<dbReference type="PANTHER" id="PTHR10270:SF161">
    <property type="entry name" value="SEX-DETERMINING REGION Y PROTEIN"/>
    <property type="match status" value="1"/>
</dbReference>
<dbReference type="PANTHER" id="PTHR10270">
    <property type="entry name" value="SOX TRANSCRIPTION FACTOR"/>
    <property type="match status" value="1"/>
</dbReference>
<dbReference type="Pfam" id="PF00505">
    <property type="entry name" value="HMG_box"/>
    <property type="match status" value="1"/>
</dbReference>
<dbReference type="PIRSF" id="PIRSF037653">
    <property type="entry name" value="SRY"/>
    <property type="match status" value="1"/>
</dbReference>
<dbReference type="SMART" id="SM00398">
    <property type="entry name" value="HMG"/>
    <property type="match status" value="1"/>
</dbReference>
<dbReference type="SUPFAM" id="SSF47095">
    <property type="entry name" value="HMG-box"/>
    <property type="match status" value="1"/>
</dbReference>
<dbReference type="PROSITE" id="PS50118">
    <property type="entry name" value="HMG_BOX_2"/>
    <property type="match status" value="1"/>
</dbReference>
<feature type="chain" id="PRO_0000048674" description="Sex-determining region Y protein">
    <location>
        <begin position="1"/>
        <end position="216"/>
    </location>
</feature>
<feature type="DNA-binding region" description="HMG box" evidence="3">
    <location>
        <begin position="54"/>
        <end position="122"/>
    </location>
</feature>
<feature type="region of interest" description="Disordered" evidence="4">
    <location>
        <begin position="31"/>
        <end position="52"/>
    </location>
</feature>
<keyword id="KW-0010">Activator</keyword>
<keyword id="KW-0112">Calmodulin-binding</keyword>
<keyword id="KW-0963">Cytoplasm</keyword>
<keyword id="KW-0221">Differentiation</keyword>
<keyword id="KW-0238">DNA-binding</keyword>
<keyword id="KW-0539">Nucleus</keyword>
<keyword id="KW-0678">Repressor</keyword>
<keyword id="KW-0726">Sexual differentiation</keyword>
<keyword id="KW-0804">Transcription</keyword>
<keyword id="KW-0805">Transcription regulation</keyword>
<evidence type="ECO:0000250" key="1">
    <source>
        <dbReference type="UniProtKB" id="P36394"/>
    </source>
</evidence>
<evidence type="ECO:0000250" key="2">
    <source>
        <dbReference type="UniProtKB" id="Q05066"/>
    </source>
</evidence>
<evidence type="ECO:0000255" key="3">
    <source>
        <dbReference type="PROSITE-ProRule" id="PRU00267"/>
    </source>
</evidence>
<evidence type="ECO:0000256" key="4">
    <source>
        <dbReference type="SAM" id="MobiDB-lite"/>
    </source>
</evidence>
<evidence type="ECO:0000305" key="5"/>
<name>SRY_KOGSI</name>